<accession>D5LWW7</accession>
<comment type="function">
    <text evidence="1 7">Forms the helical nucleocapsid (NC) with 12.71 N subunits per helical turn and a rise of 5.3 Angstrom per N subunit, protecting the genome from nucleases (Probable). The encapsidated genomic RNA serves as template for transcription and replication; encapsidation by N is coupled to RNA synthesis (By similarity). Forms the encapsidation complex with the phosphoprotein protein P (By similarity). Before encapsidation, the newly synthesized free N protein, so-called N0, is chaperoned by P (By similarity).</text>
</comment>
<comment type="subunit">
    <text evidence="1 3 5">Homomultimer; forms the nucleocapsid (PubMed:37116470). Binds to the viral genomic RNA (PubMed:37116470). N0 interacts with the phosphoprotein (via N-terminus); this interaction allows P to chaperon N0 to avoid N polymerization before encapsidation (By similarity). Interacts (via N-terminus) as N-RNA template with the phosphoprotein (via C-terminus); this interaction positions the polymerase on the template (By similarity).</text>
</comment>
<comment type="subcellular location">
    <subcellularLocation>
        <location evidence="2">Virion</location>
    </subcellularLocation>
    <subcellularLocation>
        <location evidence="5">Host cytoplasm</location>
    </subcellularLocation>
    <text evidence="5">Found in cytoplasmic viral factories.</text>
</comment>
<comment type="domain">
    <text evidence="1">Ncore is globular and carries the regions required for self-assembly and RNA-binding. Ntail is an intrinsically disordered monomeric domain in the C-terminus.</text>
</comment>
<comment type="similarity">
    <text evidence="6">Belongs to the paramyxoviruses nucleocapsid family.</text>
</comment>
<name>NCAP_MUMPE</name>
<dbReference type="EMBL" id="GU980052">
    <property type="protein sequence ID" value="ADF49549.1"/>
    <property type="molecule type" value="Viral_cRNA"/>
</dbReference>
<dbReference type="PDB" id="7OZR">
    <property type="method" value="EM"/>
    <property type="resolution" value="4.50 A"/>
    <property type="chains" value="A=1-549"/>
</dbReference>
<dbReference type="PDBsum" id="7OZR"/>
<dbReference type="SMR" id="D5LWW7"/>
<dbReference type="Proteomes" id="UP000140823">
    <property type="component" value="Genome"/>
</dbReference>
<dbReference type="GO" id="GO:0019029">
    <property type="term" value="C:helical viral capsid"/>
    <property type="evidence" value="ECO:0007669"/>
    <property type="project" value="UniProtKB-KW"/>
</dbReference>
<dbReference type="GO" id="GO:0030430">
    <property type="term" value="C:host cell cytoplasm"/>
    <property type="evidence" value="ECO:0007669"/>
    <property type="project" value="UniProtKB-SubCell"/>
</dbReference>
<dbReference type="GO" id="GO:1990904">
    <property type="term" value="C:ribonucleoprotein complex"/>
    <property type="evidence" value="ECO:0007669"/>
    <property type="project" value="UniProtKB-KW"/>
</dbReference>
<dbReference type="GO" id="GO:0019013">
    <property type="term" value="C:viral nucleocapsid"/>
    <property type="evidence" value="ECO:0007669"/>
    <property type="project" value="UniProtKB-KW"/>
</dbReference>
<dbReference type="GO" id="GO:0003723">
    <property type="term" value="F:RNA binding"/>
    <property type="evidence" value="ECO:0007669"/>
    <property type="project" value="UniProtKB-KW"/>
</dbReference>
<dbReference type="GO" id="GO:0005198">
    <property type="term" value="F:structural molecule activity"/>
    <property type="evidence" value="ECO:0007669"/>
    <property type="project" value="InterPro"/>
</dbReference>
<dbReference type="InterPro" id="IPR002021">
    <property type="entry name" value="Paramyx_ncap"/>
</dbReference>
<dbReference type="Pfam" id="PF00973">
    <property type="entry name" value="Paramyxo_ncap"/>
    <property type="match status" value="1"/>
</dbReference>
<reference key="1">
    <citation type="journal article" date="2009" name="J. Gen. Virol.">
        <title>Mumps virus Enders strain is sensitive to interferon (IFN) despite encoding a functional IFN antagonist.</title>
        <authorList>
            <person name="Young D.F."/>
            <person name="Galiano M.C."/>
            <person name="Lemon K."/>
            <person name="Chen Y.H."/>
            <person name="Andrejeva J."/>
            <person name="Duprex W.P."/>
            <person name="Rima B.K."/>
            <person name="Randall R.E."/>
        </authorList>
    </citation>
    <scope>NUCLEOTIDE SEQUENCE [GENOMIC RNA]</scope>
    <source>
        <strain>Enders</strain>
    </source>
</reference>
<reference evidence="8" key="2">
    <citation type="journal article" date="2023" name="Cell">
        <title>Molecular mechanisms of stress-induced reactivation in mumps virus condensates.</title>
        <authorList>
            <person name="Zhang X."/>
            <person name="Sridharan S."/>
            <person name="Zagoriy I."/>
            <person name="Eugster Oegema C."/>
            <person name="Ching C."/>
            <person name="Pflaesterer T."/>
            <person name="Fung H.K.H."/>
            <person name="Becher I."/>
            <person name="Poser I."/>
            <person name="Muller C.W."/>
            <person name="Hyman A.A."/>
            <person name="Savitski M.M."/>
            <person name="Mahamid J."/>
        </authorList>
    </citation>
    <scope>STRUCTURE BY ELECTRON MICROSCOPY (4.50 ANGSTROMS)</scope>
    <scope>FUNCTION</scope>
    <scope>SUBUNIT</scope>
    <scope>SUBCELLULAR LOCATION</scope>
</reference>
<organism>
    <name type="scientific">Mumps virus (strain Enders)</name>
    <name type="common">MuV</name>
    <dbReference type="NCBI Taxonomy" id="11167"/>
    <lineage>
        <taxon>Viruses</taxon>
        <taxon>Riboviria</taxon>
        <taxon>Orthornavirae</taxon>
        <taxon>Negarnaviricota</taxon>
        <taxon>Haploviricotina</taxon>
        <taxon>Monjiviricetes</taxon>
        <taxon>Mononegavirales</taxon>
        <taxon>Paramyxoviridae</taxon>
        <taxon>Rubulavirinae</taxon>
        <taxon>Orthorubulavirus</taxon>
        <taxon>Orthorubulavirus parotitidis</taxon>
        <taxon>Mumps orthorubulavirus</taxon>
    </lineage>
</organism>
<gene>
    <name type="primary">N</name>
    <name type="synonym">NP</name>
</gene>
<organismHost>
    <name type="scientific">Homo sapiens</name>
    <name type="common">Human</name>
    <dbReference type="NCBI Taxonomy" id="9606"/>
</organismHost>
<evidence type="ECO:0000250" key="1">
    <source>
        <dbReference type="UniProtKB" id="P06159"/>
    </source>
</evidence>
<evidence type="ECO:0000250" key="2">
    <source>
        <dbReference type="UniProtKB" id="Q77IS8"/>
    </source>
</evidence>
<evidence type="ECO:0000250" key="3">
    <source>
        <dbReference type="UniProtKB" id="Q9DQA5"/>
    </source>
</evidence>
<evidence type="ECO:0000256" key="4">
    <source>
        <dbReference type="SAM" id="MobiDB-lite"/>
    </source>
</evidence>
<evidence type="ECO:0000269" key="5">
    <source>
    </source>
</evidence>
<evidence type="ECO:0000305" key="6"/>
<evidence type="ECO:0000305" key="7">
    <source>
    </source>
</evidence>
<evidence type="ECO:0007744" key="8">
    <source>
        <dbReference type="PDB" id="7OZR"/>
    </source>
</evidence>
<proteinExistence type="evidence at protein level"/>
<sequence>MSSVLKAFERFTIEQELQDRGEEGSIPPETLKSAVKVFVINTPNPTTRYQMLNFCLRIICSQNARASHRVGALITLFSLPSAGMQNHIRLADRSPEAQIERCEIDGFEPGTYRLIPNARANLTANEIAAYALLADDLPPTINNGTPYVHADVEGQPCDEIEQFLDRCYSVLIQAWVMVCKCMTAYDQPAGSADRRFAKYQQQGRLEARYMLQPEAQRLIQTAIRKSLVVRQYLTFELQLARRQGLLSNRYYAMVGDIGKYIENSGLTAFFLTLKYALGTKWSPLSLAAFTGELTKLRSLMMLYRDIGEQARYLALLEAPQIMDFAPGGYPLIFSYAMGVGTVLDVQMRNYTYARPFLNGYYFQIGVETARRQQGTVDNRVADDLGLTPEQRTEVTQLVDRLARGRGAGIPGGPVNPFVPPVQQQQPAAVYEDIPALEESDDDGDEDGGAGFQNGVQVPAVRQGGQTDFRAQPLQDPIQAQLFMPLYPQVSNIPNNQNHQINRIGGLENQDLLRYNENGDSQQDARGEHGNTFPNNPNQNAQLQVGDWDE</sequence>
<keyword id="KW-0002">3D-structure</keyword>
<keyword id="KW-0167">Capsid protein</keyword>
<keyword id="KW-1139">Helical capsid protein</keyword>
<keyword id="KW-1035">Host cytoplasm</keyword>
<keyword id="KW-0597">Phosphoprotein</keyword>
<keyword id="KW-0687">Ribonucleoprotein</keyword>
<keyword id="KW-0694">RNA-binding</keyword>
<keyword id="KW-0543">Viral nucleoprotein</keyword>
<keyword id="KW-0946">Virion</keyword>
<feature type="chain" id="PRO_0000462019" description="Nucleoprotein">
    <location>
        <begin position="1"/>
        <end position="549"/>
    </location>
</feature>
<feature type="region of interest" description="Disordered" evidence="4">
    <location>
        <begin position="517"/>
        <end position="549"/>
    </location>
</feature>
<feature type="compositionally biased region" description="Polar residues" evidence="4">
    <location>
        <begin position="531"/>
        <end position="542"/>
    </location>
</feature>
<feature type="modified residue" description="Phosphoserine" evidence="3">
    <location>
        <position position="439"/>
    </location>
</feature>
<protein>
    <recommendedName>
        <fullName>Nucleoprotein</fullName>
    </recommendedName>
    <alternativeName>
        <fullName>Nucleocapsid protein</fullName>
        <shortName>NP</shortName>
        <shortName>Protein N</shortName>
    </alternativeName>
</protein>